<comment type="similarity">
    <text evidence="1">Belongs to the queuine tRNA-ribosyltransferase family.</text>
</comment>
<evidence type="ECO:0000305" key="1"/>
<reference key="1">
    <citation type="journal article" date="2005" name="Science">
        <title>Genome sequence of Theileria parva, a bovine pathogen that transforms lymphocytes.</title>
        <authorList>
            <person name="Gardner M.J."/>
            <person name="Bishop R."/>
            <person name="Shah T."/>
            <person name="de Villiers E.P."/>
            <person name="Carlton J.M."/>
            <person name="Hall N."/>
            <person name="Ren Q."/>
            <person name="Paulsen I.T."/>
            <person name="Pain A."/>
            <person name="Berriman M."/>
            <person name="Wilson R.J.M."/>
            <person name="Sato S."/>
            <person name="Ralph S.A."/>
            <person name="Mann D.J."/>
            <person name="Xiong Z."/>
            <person name="Shallom S.J."/>
            <person name="Weidman J."/>
            <person name="Jiang L."/>
            <person name="Lynn J."/>
            <person name="Weaver B."/>
            <person name="Shoaibi A."/>
            <person name="Domingo A.R."/>
            <person name="Wasawo D."/>
            <person name="Crabtree J."/>
            <person name="Wortman J.R."/>
            <person name="Haas B."/>
            <person name="Angiuoli S.V."/>
            <person name="Creasy T.H."/>
            <person name="Lu C."/>
            <person name="Suh B."/>
            <person name="Silva J.C."/>
            <person name="Utterback T.R."/>
            <person name="Feldblyum T.V."/>
            <person name="Pertea M."/>
            <person name="Allen J."/>
            <person name="Nierman W.C."/>
            <person name="Taracha E.L.N."/>
            <person name="Salzberg S.L."/>
            <person name="White O.R."/>
            <person name="Fitzhugh H.A."/>
            <person name="Morzaria S."/>
            <person name="Venter J.C."/>
            <person name="Fraser C.M."/>
            <person name="Nene V."/>
        </authorList>
    </citation>
    <scope>NUCLEOTIDE SEQUENCE [LARGE SCALE GENOMIC DNA]</scope>
    <source>
        <strain>Muguga</strain>
    </source>
</reference>
<gene>
    <name type="ordered locus">TP03_0586</name>
</gene>
<name>TGTL_THEPA</name>
<feature type="chain" id="PRO_0000295638" description="Queuine tRNA-ribosyltransferase-like protein">
    <location>
        <begin position="1"/>
        <end position="402"/>
    </location>
</feature>
<sequence>MDKYDGSRVFFREMCKNNRDDFPYRRGVIMSELHTPCCPVVCKLILPDPLTIDFISKIQQKPFLCIQFCSVLPCLEILEEFDRRSKNDKSLRRFVDYEGATTLLTFNELFNKYSRIEGNQFVFHVDSDKYLLNEHTSKKIIDLINPSISIIPTLSLKHSERKKWSARKRTKLNDLYQTYYETLSRYPNSTKLVKPIHPCIELKEMGDFEVIEFPGFGFGESLNERYEWIKEMGKNLTGKEVRIIQLKTGTPLEILHAVLMGFDVVISPYPESLSEQGFALSFELPSEFEGNYEPEYVLNLLNERCKFFDGVYKDQIKDIVDLKNSVHIDVVESLMDEKSVRKESRAYINHLLNCKEMNGNIILSSHNLYMYELLFQRIRDSIENDTLVNFVYNFIQLNVKRD</sequence>
<keyword id="KW-0328">Glycosyltransferase</keyword>
<keyword id="KW-1185">Reference proteome</keyword>
<keyword id="KW-0808">Transferase</keyword>
<organism>
    <name type="scientific">Theileria parva</name>
    <name type="common">East coast fever infection agent</name>
    <dbReference type="NCBI Taxonomy" id="5875"/>
    <lineage>
        <taxon>Eukaryota</taxon>
        <taxon>Sar</taxon>
        <taxon>Alveolata</taxon>
        <taxon>Apicomplexa</taxon>
        <taxon>Aconoidasida</taxon>
        <taxon>Piroplasmida</taxon>
        <taxon>Theileriidae</taxon>
        <taxon>Theileria</taxon>
    </lineage>
</organism>
<protein>
    <recommendedName>
        <fullName>Queuine tRNA-ribosyltransferase-like protein</fullName>
    </recommendedName>
</protein>
<accession>Q4MZD7</accession>
<dbReference type="EMBL" id="AAGK01000005">
    <property type="protein sequence ID" value="EAN31331.1"/>
    <property type="molecule type" value="Genomic_DNA"/>
</dbReference>
<dbReference type="RefSeq" id="XP_763614.1">
    <property type="nucleotide sequence ID" value="XM_758521.1"/>
</dbReference>
<dbReference type="SMR" id="Q4MZD7"/>
<dbReference type="FunCoup" id="Q4MZD7">
    <property type="interactions" value="93"/>
</dbReference>
<dbReference type="STRING" id="5875.Q4MZD7"/>
<dbReference type="EnsemblProtists" id="EAN31331">
    <property type="protein sequence ID" value="EAN31331"/>
    <property type="gene ID" value="TP03_0586"/>
</dbReference>
<dbReference type="GeneID" id="3499839"/>
<dbReference type="KEGG" id="tpv:TP03_0586"/>
<dbReference type="VEuPathDB" id="PiroplasmaDB:TpMuguga_03g00586"/>
<dbReference type="eggNOG" id="KOG3909">
    <property type="taxonomic scope" value="Eukaryota"/>
</dbReference>
<dbReference type="InParanoid" id="Q4MZD7"/>
<dbReference type="OMA" id="FREMCKN"/>
<dbReference type="Proteomes" id="UP000001949">
    <property type="component" value="Unassembled WGS sequence"/>
</dbReference>
<dbReference type="GO" id="GO:0016757">
    <property type="term" value="F:glycosyltransferase activity"/>
    <property type="evidence" value="ECO:0007669"/>
    <property type="project" value="UniProtKB-KW"/>
</dbReference>
<dbReference type="GO" id="GO:0101030">
    <property type="term" value="P:tRNA-guanine transglycosylation"/>
    <property type="evidence" value="ECO:0007669"/>
    <property type="project" value="UniProtKB-ARBA"/>
</dbReference>
<dbReference type="Gene3D" id="3.20.20.105">
    <property type="entry name" value="Queuine tRNA-ribosyltransferase-like"/>
    <property type="match status" value="1"/>
</dbReference>
<dbReference type="InterPro" id="IPR050852">
    <property type="entry name" value="Queuine_tRNA-ribosyltrfase"/>
</dbReference>
<dbReference type="InterPro" id="IPR036511">
    <property type="entry name" value="TGT-like_sf"/>
</dbReference>
<dbReference type="InterPro" id="IPR002616">
    <property type="entry name" value="tRNA_ribo_trans-like"/>
</dbReference>
<dbReference type="PANTHER" id="PTHR46064">
    <property type="entry name" value="QUEUINE TRNA-RIBOSYLTRANSFERASE ACCESSORY SUBUNIT 2"/>
    <property type="match status" value="1"/>
</dbReference>
<dbReference type="PANTHER" id="PTHR46064:SF1">
    <property type="entry name" value="QUEUINE TRNA-RIBOSYLTRANSFERASE ACCESSORY SUBUNIT 2"/>
    <property type="match status" value="1"/>
</dbReference>
<dbReference type="Pfam" id="PF01702">
    <property type="entry name" value="TGT"/>
    <property type="match status" value="1"/>
</dbReference>
<dbReference type="SUPFAM" id="SSF51713">
    <property type="entry name" value="tRNA-guanine transglycosylase"/>
    <property type="match status" value="1"/>
</dbReference>
<proteinExistence type="inferred from homology"/>